<sequence>MLIKLLTKVFGSRNDRTLRRMRKAVSLINAMEPEMEKLSDDELKAKTNEFRARIEKGESVESLIPEAFAVVREASKRVFGMRHFDVQLLGGMVLNDRCIAEMRTGEGKTLTATLPAYLNALSGKGVHVVTVNDYLAQRDAENNRPLFEFLGMSVGINLPGMPAPAKREAYAADITYGTNNEYGFDYLRDNMAFSPEERVQRKLHYALVDEVDSILIDEARTPLIISGPAEDSSEMYKKVNKIIPHLIRQEKEDSDTFQGEGHFSVDEKARQVNLTERGLVLIEELLVQEGIMDEGESLYSPGNIMLMHHVTAALRAHALFTRDVDYIVKDGEVIIVDEHTGRTMQGRRWSDGLHQAVEAKEGVEIQNENQTLASITFQNYFRLYEKLAGMTGTADTEAFEFSSIYKLDTVVVPTNRPMIRKDLPDLVYMTEAEKIQAIIEDIKERTANGQPVLVGTISIEKSEVVSRELTKAGIKHNVLNAKFHANEAGIVAQAGYPAAVTIATNMAGRGTDIMLGGSWQAEVAALEAPTEEQIAQIKADWQVRHDAVLAAGGLHIIGTERHESRRIDNQLRGRSGRQGDPGSSRFYLSMEDALMRIFASDRVSGMMRKLGMKPGEAIEHPWVTKAIANAQRKVESRNFDIRKQLLEYDDVANDQRRAIYTQRNELLDVSDVSDTINSIREDVFKATIDAYIPPQSLEEMWDIPGLQERLKNDFDLEMPIAEWLDKEPELHEETLRERILAQSIEVYQRKEEVVGAEMMRHFEKGVMLQTLDSLWKEHLAAMDYLRQGIHLRGYAQKDPKQEYKRESFAMFAAMLESLKYEVISTLSKVQVRMPEEVEAMEMQRREEAERLAQMQQLSHQDDDAAVAADLAAQTGERKIGRNDPCPCGSGKKYKQCHGRLS</sequence>
<reference key="1">
    <citation type="journal article" date="2011" name="J. Bacteriol.">
        <title>Comparative genomics of 28 Salmonella enterica isolates: evidence for CRISPR-mediated adaptive sublineage evolution.</title>
        <authorList>
            <person name="Fricke W.F."/>
            <person name="Mammel M.K."/>
            <person name="McDermott P.F."/>
            <person name="Tartera C."/>
            <person name="White D.G."/>
            <person name="Leclerc J.E."/>
            <person name="Ravel J."/>
            <person name="Cebula T.A."/>
        </authorList>
    </citation>
    <scope>NUCLEOTIDE SEQUENCE [LARGE SCALE GENOMIC DNA]</scope>
    <source>
        <strain>SL476</strain>
    </source>
</reference>
<accession>B4TJ94</accession>
<comment type="function">
    <text evidence="1">Part of the Sec protein translocase complex. Interacts with the SecYEG preprotein conducting channel. Has a central role in coupling the hydrolysis of ATP to the transfer of proteins into and across the cell membrane, serving both as a receptor for the preprotein-SecB complex and as an ATP-driven molecular motor driving the stepwise translocation of polypeptide chains across the membrane.</text>
</comment>
<comment type="catalytic activity">
    <reaction evidence="1">
        <text>ATP + H2O + cellular proteinSide 1 = ADP + phosphate + cellular proteinSide 2.</text>
        <dbReference type="EC" id="7.4.2.8"/>
    </reaction>
</comment>
<comment type="cofactor">
    <cofactor evidence="1">
        <name>Zn(2+)</name>
        <dbReference type="ChEBI" id="CHEBI:29105"/>
    </cofactor>
    <text evidence="1">May bind 1 zinc ion per subunit.</text>
</comment>
<comment type="subunit">
    <text evidence="1">Monomer and homodimer. Part of the essential Sec protein translocation apparatus which comprises SecA, SecYEG and auxiliary proteins SecDF-YajC and YidC.</text>
</comment>
<comment type="subcellular location">
    <subcellularLocation>
        <location evidence="1">Cell inner membrane</location>
        <topology evidence="1">Peripheral membrane protein</topology>
        <orientation evidence="1">Cytoplasmic side</orientation>
    </subcellularLocation>
    <subcellularLocation>
        <location evidence="1">Cytoplasm</location>
    </subcellularLocation>
    <text evidence="1">Distribution is 50-50.</text>
</comment>
<comment type="induction">
    <text evidence="1">Repressed under conditions of excess protein secretion capacity and derepressed when protein secretion becomes limiting. This is regulated by SecM.</text>
</comment>
<comment type="similarity">
    <text evidence="1">Belongs to the SecA family.</text>
</comment>
<feature type="chain" id="PRO_1000145057" description="Protein translocase subunit SecA">
    <location>
        <begin position="1"/>
        <end position="901"/>
    </location>
</feature>
<feature type="binding site" evidence="1">
    <location>
        <position position="87"/>
    </location>
    <ligand>
        <name>ATP</name>
        <dbReference type="ChEBI" id="CHEBI:30616"/>
    </ligand>
</feature>
<feature type="binding site" evidence="1">
    <location>
        <begin position="105"/>
        <end position="109"/>
    </location>
    <ligand>
        <name>ATP</name>
        <dbReference type="ChEBI" id="CHEBI:30616"/>
    </ligand>
</feature>
<feature type="binding site" evidence="1">
    <location>
        <position position="512"/>
    </location>
    <ligand>
        <name>ATP</name>
        <dbReference type="ChEBI" id="CHEBI:30616"/>
    </ligand>
</feature>
<feature type="binding site" evidence="1">
    <location>
        <position position="885"/>
    </location>
    <ligand>
        <name>Zn(2+)</name>
        <dbReference type="ChEBI" id="CHEBI:29105"/>
    </ligand>
</feature>
<feature type="binding site" evidence="1">
    <location>
        <position position="887"/>
    </location>
    <ligand>
        <name>Zn(2+)</name>
        <dbReference type="ChEBI" id="CHEBI:29105"/>
    </ligand>
</feature>
<feature type="binding site" evidence="1">
    <location>
        <position position="896"/>
    </location>
    <ligand>
        <name>Zn(2+)</name>
        <dbReference type="ChEBI" id="CHEBI:29105"/>
    </ligand>
</feature>
<feature type="binding site" evidence="1">
    <location>
        <position position="897"/>
    </location>
    <ligand>
        <name>Zn(2+)</name>
        <dbReference type="ChEBI" id="CHEBI:29105"/>
    </ligand>
</feature>
<protein>
    <recommendedName>
        <fullName evidence="1">Protein translocase subunit SecA</fullName>
        <ecNumber evidence="1">7.4.2.8</ecNumber>
    </recommendedName>
</protein>
<gene>
    <name evidence="1" type="primary">secA</name>
    <name type="ordered locus">SeHA_C0148</name>
</gene>
<name>SECA_SALHS</name>
<dbReference type="EC" id="7.4.2.8" evidence="1"/>
<dbReference type="EMBL" id="CP001120">
    <property type="protein sequence ID" value="ACF69236.1"/>
    <property type="molecule type" value="Genomic_DNA"/>
</dbReference>
<dbReference type="RefSeq" id="WP_000905756.1">
    <property type="nucleotide sequence ID" value="NC_011083.1"/>
</dbReference>
<dbReference type="SMR" id="B4TJ94"/>
<dbReference type="KEGG" id="seh:SeHA_C0148"/>
<dbReference type="HOGENOM" id="CLU_005314_3_0_6"/>
<dbReference type="Proteomes" id="UP000001866">
    <property type="component" value="Chromosome"/>
</dbReference>
<dbReference type="GO" id="GO:0031522">
    <property type="term" value="C:cell envelope Sec protein transport complex"/>
    <property type="evidence" value="ECO:0007669"/>
    <property type="project" value="TreeGrafter"/>
</dbReference>
<dbReference type="GO" id="GO:0005829">
    <property type="term" value="C:cytosol"/>
    <property type="evidence" value="ECO:0007669"/>
    <property type="project" value="TreeGrafter"/>
</dbReference>
<dbReference type="GO" id="GO:0005886">
    <property type="term" value="C:plasma membrane"/>
    <property type="evidence" value="ECO:0007669"/>
    <property type="project" value="UniProtKB-SubCell"/>
</dbReference>
<dbReference type="GO" id="GO:0005524">
    <property type="term" value="F:ATP binding"/>
    <property type="evidence" value="ECO:0007669"/>
    <property type="project" value="UniProtKB-UniRule"/>
</dbReference>
<dbReference type="GO" id="GO:0046872">
    <property type="term" value="F:metal ion binding"/>
    <property type="evidence" value="ECO:0007669"/>
    <property type="project" value="UniProtKB-KW"/>
</dbReference>
<dbReference type="GO" id="GO:0008564">
    <property type="term" value="F:protein-exporting ATPase activity"/>
    <property type="evidence" value="ECO:0007669"/>
    <property type="project" value="UniProtKB-EC"/>
</dbReference>
<dbReference type="GO" id="GO:0065002">
    <property type="term" value="P:intracellular protein transmembrane transport"/>
    <property type="evidence" value="ECO:0007669"/>
    <property type="project" value="UniProtKB-UniRule"/>
</dbReference>
<dbReference type="GO" id="GO:0017038">
    <property type="term" value="P:protein import"/>
    <property type="evidence" value="ECO:0007669"/>
    <property type="project" value="InterPro"/>
</dbReference>
<dbReference type="GO" id="GO:0006605">
    <property type="term" value="P:protein targeting"/>
    <property type="evidence" value="ECO:0007669"/>
    <property type="project" value="UniProtKB-UniRule"/>
</dbReference>
<dbReference type="GO" id="GO:0043952">
    <property type="term" value="P:protein transport by the Sec complex"/>
    <property type="evidence" value="ECO:0007669"/>
    <property type="project" value="TreeGrafter"/>
</dbReference>
<dbReference type="CDD" id="cd17928">
    <property type="entry name" value="DEXDc_SecA"/>
    <property type="match status" value="1"/>
</dbReference>
<dbReference type="CDD" id="cd18803">
    <property type="entry name" value="SF2_C_secA"/>
    <property type="match status" value="1"/>
</dbReference>
<dbReference type="FunFam" id="1.10.3060.10:FF:000001">
    <property type="entry name" value="Preprotein translocase subunit SecA"/>
    <property type="match status" value="1"/>
</dbReference>
<dbReference type="FunFam" id="3.40.50.300:FF:000081">
    <property type="entry name" value="Preprotein translocase subunit SecA"/>
    <property type="match status" value="1"/>
</dbReference>
<dbReference type="FunFam" id="3.40.50.300:FF:000113">
    <property type="entry name" value="Preprotein translocase subunit SecA"/>
    <property type="match status" value="1"/>
</dbReference>
<dbReference type="FunFam" id="3.90.1440.10:FF:000001">
    <property type="entry name" value="Preprotein translocase subunit SecA"/>
    <property type="match status" value="1"/>
</dbReference>
<dbReference type="Gene3D" id="1.10.3060.10">
    <property type="entry name" value="Helical scaffold and wing domains of SecA"/>
    <property type="match status" value="1"/>
</dbReference>
<dbReference type="Gene3D" id="3.40.50.300">
    <property type="entry name" value="P-loop containing nucleotide triphosphate hydrolases"/>
    <property type="match status" value="2"/>
</dbReference>
<dbReference type="Gene3D" id="3.90.1440.10">
    <property type="entry name" value="SecA, preprotein cross-linking domain"/>
    <property type="match status" value="1"/>
</dbReference>
<dbReference type="HAMAP" id="MF_01382">
    <property type="entry name" value="SecA"/>
    <property type="match status" value="1"/>
</dbReference>
<dbReference type="InterPro" id="IPR014001">
    <property type="entry name" value="Helicase_ATP-bd"/>
</dbReference>
<dbReference type="InterPro" id="IPR027417">
    <property type="entry name" value="P-loop_NTPase"/>
</dbReference>
<dbReference type="InterPro" id="IPR004027">
    <property type="entry name" value="SEC_C_motif"/>
</dbReference>
<dbReference type="InterPro" id="IPR000185">
    <property type="entry name" value="SecA"/>
</dbReference>
<dbReference type="InterPro" id="IPR020937">
    <property type="entry name" value="SecA_CS"/>
</dbReference>
<dbReference type="InterPro" id="IPR011115">
    <property type="entry name" value="SecA_DEAD"/>
</dbReference>
<dbReference type="InterPro" id="IPR014018">
    <property type="entry name" value="SecA_motor_DEAD"/>
</dbReference>
<dbReference type="InterPro" id="IPR011130">
    <property type="entry name" value="SecA_preprotein_X-link_dom"/>
</dbReference>
<dbReference type="InterPro" id="IPR044722">
    <property type="entry name" value="SecA_SF2_C"/>
</dbReference>
<dbReference type="InterPro" id="IPR011116">
    <property type="entry name" value="SecA_Wing/Scaffold"/>
</dbReference>
<dbReference type="InterPro" id="IPR036266">
    <property type="entry name" value="SecA_Wing/Scaffold_sf"/>
</dbReference>
<dbReference type="InterPro" id="IPR036670">
    <property type="entry name" value="SecA_X-link_sf"/>
</dbReference>
<dbReference type="NCBIfam" id="NF009538">
    <property type="entry name" value="PRK12904.1"/>
    <property type="match status" value="1"/>
</dbReference>
<dbReference type="NCBIfam" id="TIGR00963">
    <property type="entry name" value="secA"/>
    <property type="match status" value="1"/>
</dbReference>
<dbReference type="PANTHER" id="PTHR30612:SF0">
    <property type="entry name" value="CHLOROPLAST PROTEIN-TRANSPORTING ATPASE"/>
    <property type="match status" value="1"/>
</dbReference>
<dbReference type="PANTHER" id="PTHR30612">
    <property type="entry name" value="SECA INNER MEMBRANE COMPONENT OF SEC PROTEIN SECRETION SYSTEM"/>
    <property type="match status" value="1"/>
</dbReference>
<dbReference type="Pfam" id="PF21090">
    <property type="entry name" value="P-loop_SecA"/>
    <property type="match status" value="1"/>
</dbReference>
<dbReference type="Pfam" id="PF02810">
    <property type="entry name" value="SEC-C"/>
    <property type="match status" value="1"/>
</dbReference>
<dbReference type="Pfam" id="PF07517">
    <property type="entry name" value="SecA_DEAD"/>
    <property type="match status" value="1"/>
</dbReference>
<dbReference type="Pfam" id="PF01043">
    <property type="entry name" value="SecA_PP_bind"/>
    <property type="match status" value="1"/>
</dbReference>
<dbReference type="Pfam" id="PF07516">
    <property type="entry name" value="SecA_SW"/>
    <property type="match status" value="1"/>
</dbReference>
<dbReference type="PRINTS" id="PR00906">
    <property type="entry name" value="SECA"/>
</dbReference>
<dbReference type="SMART" id="SM00957">
    <property type="entry name" value="SecA_DEAD"/>
    <property type="match status" value="1"/>
</dbReference>
<dbReference type="SMART" id="SM00958">
    <property type="entry name" value="SecA_PP_bind"/>
    <property type="match status" value="1"/>
</dbReference>
<dbReference type="SUPFAM" id="SSF81886">
    <property type="entry name" value="Helical scaffold and wing domains of SecA"/>
    <property type="match status" value="1"/>
</dbReference>
<dbReference type="SUPFAM" id="SSF52540">
    <property type="entry name" value="P-loop containing nucleoside triphosphate hydrolases"/>
    <property type="match status" value="2"/>
</dbReference>
<dbReference type="SUPFAM" id="SSF81767">
    <property type="entry name" value="Pre-protein crosslinking domain of SecA"/>
    <property type="match status" value="1"/>
</dbReference>
<dbReference type="PROSITE" id="PS01312">
    <property type="entry name" value="SECA"/>
    <property type="match status" value="1"/>
</dbReference>
<dbReference type="PROSITE" id="PS51196">
    <property type="entry name" value="SECA_MOTOR_DEAD"/>
    <property type="match status" value="1"/>
</dbReference>
<proteinExistence type="inferred from homology"/>
<organism>
    <name type="scientific">Salmonella heidelberg (strain SL476)</name>
    <dbReference type="NCBI Taxonomy" id="454169"/>
    <lineage>
        <taxon>Bacteria</taxon>
        <taxon>Pseudomonadati</taxon>
        <taxon>Pseudomonadota</taxon>
        <taxon>Gammaproteobacteria</taxon>
        <taxon>Enterobacterales</taxon>
        <taxon>Enterobacteriaceae</taxon>
        <taxon>Salmonella</taxon>
    </lineage>
</organism>
<keyword id="KW-0067">ATP-binding</keyword>
<keyword id="KW-0997">Cell inner membrane</keyword>
<keyword id="KW-1003">Cell membrane</keyword>
<keyword id="KW-0963">Cytoplasm</keyword>
<keyword id="KW-0472">Membrane</keyword>
<keyword id="KW-0479">Metal-binding</keyword>
<keyword id="KW-0547">Nucleotide-binding</keyword>
<keyword id="KW-0653">Protein transport</keyword>
<keyword id="KW-1278">Translocase</keyword>
<keyword id="KW-0811">Translocation</keyword>
<keyword id="KW-0813">Transport</keyword>
<keyword id="KW-0862">Zinc</keyword>
<evidence type="ECO:0000255" key="1">
    <source>
        <dbReference type="HAMAP-Rule" id="MF_01382"/>
    </source>
</evidence>